<keyword id="KW-0131">Cell cycle</keyword>
<keyword id="KW-0132">Cell division</keyword>
<keyword id="KW-0175">Coiled coil</keyword>
<keyword id="KW-0963">Cytoplasm</keyword>
<keyword id="KW-0206">Cytoskeleton</keyword>
<keyword id="KW-0493">Microtubule</keyword>
<keyword id="KW-0498">Mitosis</keyword>
<keyword id="KW-1185">Reference proteome</keyword>
<keyword id="KW-0677">Repeat</keyword>
<keyword id="KW-0813">Transport</keyword>
<keyword id="KW-0853">WD repeat</keyword>
<dbReference type="EMBL" id="CM000071">
    <property type="protein sequence ID" value="EAL25093.1"/>
    <property type="molecule type" value="Genomic_DNA"/>
</dbReference>
<dbReference type="RefSeq" id="XP_001360518.1">
    <property type="nucleotide sequence ID" value="XM_001360481.3"/>
</dbReference>
<dbReference type="SMR" id="Q291L9"/>
<dbReference type="FunCoup" id="Q291L9">
    <property type="interactions" value="2067"/>
</dbReference>
<dbReference type="STRING" id="46245.Q291L9"/>
<dbReference type="EnsemblMetazoa" id="FBtr0278426">
    <property type="protein sequence ID" value="FBpp0276864"/>
    <property type="gene ID" value="FBgn0081067"/>
</dbReference>
<dbReference type="GeneID" id="4803869"/>
<dbReference type="KEGG" id="dpo:4803869"/>
<dbReference type="CTD" id="36791"/>
<dbReference type="eggNOG" id="KOG0295">
    <property type="taxonomic scope" value="Eukaryota"/>
</dbReference>
<dbReference type="HOGENOM" id="CLU_000288_57_15_1"/>
<dbReference type="InParanoid" id="Q291L9"/>
<dbReference type="OMA" id="WHVATKE"/>
<dbReference type="PhylomeDB" id="Q291L9"/>
<dbReference type="Proteomes" id="UP000001819">
    <property type="component" value="Chromosome 3"/>
</dbReference>
<dbReference type="Bgee" id="FBgn0081067">
    <property type="expression patterns" value="Expressed in insect adult head and 2 other cell types or tissues"/>
</dbReference>
<dbReference type="GO" id="GO:0005813">
    <property type="term" value="C:centrosome"/>
    <property type="evidence" value="ECO:0007669"/>
    <property type="project" value="UniProtKB-SubCell"/>
</dbReference>
<dbReference type="GO" id="GO:0005737">
    <property type="term" value="C:cytoplasm"/>
    <property type="evidence" value="ECO:0007669"/>
    <property type="project" value="UniProtKB-UniRule"/>
</dbReference>
<dbReference type="GO" id="GO:0005874">
    <property type="term" value="C:microtubule"/>
    <property type="evidence" value="ECO:0007669"/>
    <property type="project" value="UniProtKB-KW"/>
</dbReference>
<dbReference type="GO" id="GO:0005875">
    <property type="term" value="C:microtubule associated complex"/>
    <property type="evidence" value="ECO:0007669"/>
    <property type="project" value="UniProtKB-UniRule"/>
</dbReference>
<dbReference type="GO" id="GO:0070840">
    <property type="term" value="F:dynein complex binding"/>
    <property type="evidence" value="ECO:0007669"/>
    <property type="project" value="UniProtKB-UniRule"/>
</dbReference>
<dbReference type="GO" id="GO:0051301">
    <property type="term" value="P:cell division"/>
    <property type="evidence" value="ECO:0007669"/>
    <property type="project" value="UniProtKB-KW"/>
</dbReference>
<dbReference type="GO" id="GO:0000132">
    <property type="term" value="P:establishment of mitotic spindle orientation"/>
    <property type="evidence" value="ECO:0007669"/>
    <property type="project" value="UniProtKB-UniRule"/>
</dbReference>
<dbReference type="GO" id="GO:0051012">
    <property type="term" value="P:microtubule sliding"/>
    <property type="evidence" value="ECO:0007669"/>
    <property type="project" value="UniProtKB-UniRule"/>
</dbReference>
<dbReference type="CDD" id="cd00200">
    <property type="entry name" value="WD40"/>
    <property type="match status" value="1"/>
</dbReference>
<dbReference type="FunFam" id="2.130.10.10:FF:000038">
    <property type="entry name" value="Lissencephaly-1 homolog B"/>
    <property type="match status" value="1"/>
</dbReference>
<dbReference type="FunFam" id="1.20.960.30:FF:000002">
    <property type="entry name" value="Platelet-activating factor acetylhydrolase ib"/>
    <property type="match status" value="1"/>
</dbReference>
<dbReference type="Gene3D" id="1.20.960.30">
    <property type="match status" value="1"/>
</dbReference>
<dbReference type="Gene3D" id="2.130.10.10">
    <property type="entry name" value="YVTN repeat-like/Quinoprotein amine dehydrogenase"/>
    <property type="match status" value="1"/>
</dbReference>
<dbReference type="HAMAP" id="MF_03141">
    <property type="entry name" value="lis1"/>
    <property type="match status" value="1"/>
</dbReference>
<dbReference type="InterPro" id="IPR017252">
    <property type="entry name" value="Dynein_regulator_LIS1"/>
</dbReference>
<dbReference type="InterPro" id="IPR020472">
    <property type="entry name" value="G-protein_beta_WD-40_rep"/>
</dbReference>
<dbReference type="InterPro" id="IPR037190">
    <property type="entry name" value="LIS1_N"/>
</dbReference>
<dbReference type="InterPro" id="IPR006594">
    <property type="entry name" value="LisH"/>
</dbReference>
<dbReference type="InterPro" id="IPR056795">
    <property type="entry name" value="PAC1-like_LisH-like_dom"/>
</dbReference>
<dbReference type="InterPro" id="IPR015943">
    <property type="entry name" value="WD40/YVTN_repeat-like_dom_sf"/>
</dbReference>
<dbReference type="InterPro" id="IPR019775">
    <property type="entry name" value="WD40_repeat_CS"/>
</dbReference>
<dbReference type="InterPro" id="IPR036322">
    <property type="entry name" value="WD40_repeat_dom_sf"/>
</dbReference>
<dbReference type="InterPro" id="IPR001680">
    <property type="entry name" value="WD40_rpt"/>
</dbReference>
<dbReference type="InterPro" id="IPR050349">
    <property type="entry name" value="WD_LIS1/nudF_dynein_reg"/>
</dbReference>
<dbReference type="PANTHER" id="PTHR44129">
    <property type="entry name" value="WD REPEAT-CONTAINING PROTEIN POP1"/>
    <property type="match status" value="1"/>
</dbReference>
<dbReference type="Pfam" id="PF24951">
    <property type="entry name" value="LisH_PAC1"/>
    <property type="match status" value="1"/>
</dbReference>
<dbReference type="Pfam" id="PF00400">
    <property type="entry name" value="WD40"/>
    <property type="match status" value="7"/>
</dbReference>
<dbReference type="PIRSF" id="PIRSF037647">
    <property type="entry name" value="Dynein_regulator_Lis1"/>
    <property type="match status" value="1"/>
</dbReference>
<dbReference type="PRINTS" id="PR00320">
    <property type="entry name" value="GPROTEINBRPT"/>
</dbReference>
<dbReference type="SMART" id="SM00667">
    <property type="entry name" value="LisH"/>
    <property type="match status" value="1"/>
</dbReference>
<dbReference type="SMART" id="SM00320">
    <property type="entry name" value="WD40"/>
    <property type="match status" value="7"/>
</dbReference>
<dbReference type="SUPFAM" id="SSF109925">
    <property type="entry name" value="Lissencephaly-1 protein (Lis-1, PAF-AH alpha) N-terminal domain"/>
    <property type="match status" value="1"/>
</dbReference>
<dbReference type="SUPFAM" id="SSF50978">
    <property type="entry name" value="WD40 repeat-like"/>
    <property type="match status" value="1"/>
</dbReference>
<dbReference type="PROSITE" id="PS50896">
    <property type="entry name" value="LISH"/>
    <property type="match status" value="1"/>
</dbReference>
<dbReference type="PROSITE" id="PS00678">
    <property type="entry name" value="WD_REPEATS_1"/>
    <property type="match status" value="6"/>
</dbReference>
<dbReference type="PROSITE" id="PS50082">
    <property type="entry name" value="WD_REPEATS_2"/>
    <property type="match status" value="7"/>
</dbReference>
<dbReference type="PROSITE" id="PS50294">
    <property type="entry name" value="WD_REPEATS_REGION"/>
    <property type="match status" value="1"/>
</dbReference>
<feature type="chain" id="PRO_0000405045" description="Lissencephaly-1 homolog">
    <location>
        <begin position="1"/>
        <end position="411"/>
    </location>
</feature>
<feature type="domain" description="LisH" evidence="1">
    <location>
        <begin position="9"/>
        <end position="41"/>
    </location>
</feature>
<feature type="repeat" description="WD 1">
    <location>
        <begin position="106"/>
        <end position="147"/>
    </location>
</feature>
<feature type="repeat" description="WD 2">
    <location>
        <begin position="148"/>
        <end position="187"/>
    </location>
</feature>
<feature type="repeat" description="WD 3">
    <location>
        <begin position="191"/>
        <end position="230"/>
    </location>
</feature>
<feature type="repeat" description="WD 4">
    <location>
        <begin position="233"/>
        <end position="272"/>
    </location>
</feature>
<feature type="repeat" description="WD 5">
    <location>
        <begin position="275"/>
        <end position="334"/>
    </location>
</feature>
<feature type="repeat" description="WD 6">
    <location>
        <begin position="337"/>
        <end position="376"/>
    </location>
</feature>
<feature type="repeat" description="WD 7">
    <location>
        <begin position="379"/>
        <end position="411"/>
    </location>
</feature>
<feature type="coiled-coil region" evidence="1">
    <location>
        <begin position="56"/>
        <end position="83"/>
    </location>
</feature>
<evidence type="ECO:0000255" key="1">
    <source>
        <dbReference type="HAMAP-Rule" id="MF_03141"/>
    </source>
</evidence>
<comment type="function">
    <text evidence="1">Positively regulates the activity of the minus-end directed microtubule motor protein dynein. May enhance dynein-mediated microtubule sliding by targeting dynein to the microtubule plus end. Required for several dynein- and microtubule-dependent processes.</text>
</comment>
<comment type="subcellular location">
    <subcellularLocation>
        <location evidence="1">Cytoplasm</location>
        <location evidence="1">Cytoskeleton</location>
    </subcellularLocation>
    <subcellularLocation>
        <location evidence="1">Cytoplasm</location>
        <location evidence="1">Cytoskeleton</location>
        <location evidence="1">Microtubule organizing center</location>
        <location evidence="1">Centrosome</location>
    </subcellularLocation>
    <text evidence="1">Localizes to the plus end of microtubules and to the centrosome.</text>
</comment>
<comment type="domain">
    <text evidence="1">Dimerization mediated by the LisH domain may be required to activate dynein.</text>
</comment>
<comment type="similarity">
    <text evidence="1">Belongs to the WD repeat LIS1/nudF family.</text>
</comment>
<name>LIS1_DROPS</name>
<reference key="1">
    <citation type="journal article" date="2005" name="Genome Res.">
        <title>Comparative genome sequencing of Drosophila pseudoobscura: chromosomal, gene, and cis-element evolution.</title>
        <authorList>
            <person name="Richards S."/>
            <person name="Liu Y."/>
            <person name="Bettencourt B.R."/>
            <person name="Hradecky P."/>
            <person name="Letovsky S."/>
            <person name="Nielsen R."/>
            <person name="Thornton K."/>
            <person name="Hubisz M.J."/>
            <person name="Chen R."/>
            <person name="Meisel R.P."/>
            <person name="Couronne O."/>
            <person name="Hua S."/>
            <person name="Smith M.A."/>
            <person name="Zhang P."/>
            <person name="Liu J."/>
            <person name="Bussemaker H.J."/>
            <person name="van Batenburg M.F."/>
            <person name="Howells S.L."/>
            <person name="Scherer S.E."/>
            <person name="Sodergren E."/>
            <person name="Matthews B.B."/>
            <person name="Crosby M.A."/>
            <person name="Schroeder A.J."/>
            <person name="Ortiz-Barrientos D."/>
            <person name="Rives C.M."/>
            <person name="Metzker M.L."/>
            <person name="Muzny D.M."/>
            <person name="Scott G."/>
            <person name="Steffen D."/>
            <person name="Wheeler D.A."/>
            <person name="Worley K.C."/>
            <person name="Havlak P."/>
            <person name="Durbin K.J."/>
            <person name="Egan A."/>
            <person name="Gill R."/>
            <person name="Hume J."/>
            <person name="Morgan M.B."/>
            <person name="Miner G."/>
            <person name="Hamilton C."/>
            <person name="Huang Y."/>
            <person name="Waldron L."/>
            <person name="Verduzco D."/>
            <person name="Clerc-Blankenburg K.P."/>
            <person name="Dubchak I."/>
            <person name="Noor M.A.F."/>
            <person name="Anderson W."/>
            <person name="White K.P."/>
            <person name="Clark A.G."/>
            <person name="Schaeffer S.W."/>
            <person name="Gelbart W.M."/>
            <person name="Weinstock G.M."/>
            <person name="Gibbs R.A."/>
        </authorList>
    </citation>
    <scope>NUCLEOTIDE SEQUENCE [LARGE SCALE GENOMIC DNA]</scope>
    <source>
        <strain>MV2-25 / Tucson 14011-0121.94</strain>
    </source>
</reference>
<sequence length="411" mass="46462">MKMVLSQRQREELNQAIADYLGSNGYGDSLETFRKEADVSTESEKKFGGLLEKKWTSVIRLQKKVMELEAKLTEAEKEVIEGAPTKNKRTPGEWIPRPPEKYSLTGHRASITRVIFHPIFGLMVSASEDATIKIWDFETGEYERSLKGHTDSVQDVAFDSQGKLLASCSADLSIKLWDFQQSYECVKTMHGHDHNVSSVAFVPAGDYVLSASRDRTIKMWEVATGYCVKTYTGHREWVRMVRVHIEGSIFATCSNDHTIRVWLMNSKDCKVELRDHEHTVECIAWAPEAAASAINEAAGADNKKGHHQGPFLASGSRDKTIRIWDVSVGLCLLTLNGHDNWVRGLAFHPGGKYLVSASDDKTIRVWDLRNKRCMKTLYAHQHFCTSIDFHKAHPYVISGSVDQTVKVWECR</sequence>
<protein>
    <recommendedName>
        <fullName evidence="1">Lissencephaly-1 homolog</fullName>
    </recommendedName>
</protein>
<proteinExistence type="inferred from homology"/>
<accession>Q291L9</accession>
<gene>
    <name evidence="1" type="primary">Lis-1</name>
    <name type="ORF">GA21079</name>
</gene>
<organism>
    <name type="scientific">Drosophila pseudoobscura pseudoobscura</name>
    <name type="common">Fruit fly</name>
    <dbReference type="NCBI Taxonomy" id="46245"/>
    <lineage>
        <taxon>Eukaryota</taxon>
        <taxon>Metazoa</taxon>
        <taxon>Ecdysozoa</taxon>
        <taxon>Arthropoda</taxon>
        <taxon>Hexapoda</taxon>
        <taxon>Insecta</taxon>
        <taxon>Pterygota</taxon>
        <taxon>Neoptera</taxon>
        <taxon>Endopterygota</taxon>
        <taxon>Diptera</taxon>
        <taxon>Brachycera</taxon>
        <taxon>Muscomorpha</taxon>
        <taxon>Ephydroidea</taxon>
        <taxon>Drosophilidae</taxon>
        <taxon>Drosophila</taxon>
        <taxon>Sophophora</taxon>
    </lineage>
</organism>